<proteinExistence type="evidence at protein level"/>
<reference key="1">
    <citation type="journal article" date="1981" name="Cell">
        <title>Sequence and gene organization of mouse mitochondrial DNA.</title>
        <authorList>
            <person name="Bibb M.J."/>
            <person name="van Etten R.A."/>
            <person name="Wright C.T."/>
            <person name="Walberg M.W."/>
            <person name="Clayton D.A."/>
        </authorList>
    </citation>
    <scope>NUCLEOTIDE SEQUENCE [GENOMIC DNA]</scope>
</reference>
<reference key="2">
    <citation type="journal article" date="2003" name="Nucleic Acids Res.">
        <title>Revisiting the mouse mitochondrial DNA sequence.</title>
        <authorList>
            <person name="Bayona-Bafaluy M.P."/>
            <person name="Acin-Perez R."/>
            <person name="Mullikin J.C."/>
            <person name="Park J.S."/>
            <person name="Moreno-Loshuertos R."/>
            <person name="Hu P."/>
            <person name="Perez-Martos A."/>
            <person name="Fernandez-Silva P."/>
            <person name="Bai Y."/>
            <person name="Enriquez J.A."/>
        </authorList>
    </citation>
    <scope>NUCLEOTIDE SEQUENCE [LARGE SCALE GENOMIC DNA]</scope>
    <source>
        <strain>C57BL/6J</strain>
    </source>
</reference>
<reference key="3">
    <citation type="journal article" date="2010" name="Cell">
        <title>A tissue-specific atlas of mouse protein phosphorylation and expression.</title>
        <authorList>
            <person name="Huttlin E.L."/>
            <person name="Jedrychowski M.P."/>
            <person name="Elias J.E."/>
            <person name="Goswami T."/>
            <person name="Rad R."/>
            <person name="Beausoleil S.A."/>
            <person name="Villen J."/>
            <person name="Haas W."/>
            <person name="Sowa M.E."/>
            <person name="Gygi S.P."/>
        </authorList>
    </citation>
    <scope>IDENTIFICATION BY MASS SPECTROMETRY [LARGE SCALE ANALYSIS]</scope>
    <source>
        <tissue>Brown adipose tissue</tissue>
        <tissue>Heart</tissue>
        <tissue>Kidney</tissue>
        <tissue>Liver</tissue>
        <tissue>Testis</tissue>
    </source>
</reference>
<reference evidence="8 9" key="4">
    <citation type="journal article" date="2018" name="Nat. Struct. Mol. Biol.">
        <title>Cryo-EM structures of complex I from mouse heart mitochondria in two biochemically defined states.</title>
        <authorList>
            <person name="Agip A.A."/>
            <person name="Blaza J.N."/>
            <person name="Bridges H.R."/>
            <person name="Viscomi C."/>
            <person name="Rawson S."/>
            <person name="Muench S.P."/>
            <person name="Hirst J."/>
        </authorList>
    </citation>
    <scope>STRUCTURE BY ELECTRON MICROSCOPY (3.30 ANGSTROMS)</scope>
    <scope>FUNCTION</scope>
    <scope>CATALYTIC ACTIVITY</scope>
    <scope>SUBUNIT</scope>
</reference>
<reference evidence="10" key="5">
    <citation type="journal article" date="2024" name="Nat. Struct. Mol. Biol.">
        <title>SCAF1 drives the compositional diversity of mammalian respirasomes.</title>
        <authorList>
            <person name="Vercellino I."/>
            <person name="Sazanov L.A."/>
        </authorList>
    </citation>
    <scope>STRUCTURE BY ELECTRON MICROSCOPY (3.60 ANGSTROMS) IN COMPLEX WITH MITOCHONDRIAL RESPIRATORY SUPERCOMPLEX</scope>
    <scope>FUNCTION</scope>
    <scope>SUBCELLULAR LOCATION</scope>
    <scope>SUBUNIT</scope>
</reference>
<comment type="function">
    <text evidence="3 4">Core subunit of the mitochondrial membrane respiratory chain NADH dehydrogenase (Complex I) which catalyzes electron transfer from NADH through the respiratory chain, using ubiquinone as an electron acceptor (PubMed:29915388, PubMed:38575788). Part of the enzyme membrane arm which is embedded in the lipid bilayer and involved in proton translocation (PubMed:29915388).</text>
</comment>
<comment type="catalytic activity">
    <reaction evidence="6">
        <text>a ubiquinone + NADH + 5 H(+)(in) = a ubiquinol + NAD(+) + 4 H(+)(out)</text>
        <dbReference type="Rhea" id="RHEA:29091"/>
        <dbReference type="Rhea" id="RHEA-COMP:9565"/>
        <dbReference type="Rhea" id="RHEA-COMP:9566"/>
        <dbReference type="ChEBI" id="CHEBI:15378"/>
        <dbReference type="ChEBI" id="CHEBI:16389"/>
        <dbReference type="ChEBI" id="CHEBI:17976"/>
        <dbReference type="ChEBI" id="CHEBI:57540"/>
        <dbReference type="ChEBI" id="CHEBI:57945"/>
        <dbReference type="EC" id="7.1.1.2"/>
    </reaction>
    <physiologicalReaction direction="left-to-right" evidence="6">
        <dbReference type="Rhea" id="RHEA:29092"/>
    </physiologicalReaction>
</comment>
<comment type="subunit">
    <text evidence="3 4">Core subunit of respiratory chain NADH dehydrogenase (Complex I) which is composed of 45 different subunits.</text>
</comment>
<comment type="subcellular location">
    <subcellularLocation>
        <location evidence="4">Mitochondrion inner membrane</location>
        <topology evidence="2">Multi-pass membrane protein</topology>
    </subcellularLocation>
</comment>
<comment type="similarity">
    <text evidence="5">Belongs to the complex I subunit 4L family.</text>
</comment>
<sequence length="98" mass="10607">MPSTFFNLTMAFSLSLLGTLMFRSHLMSTLLCLEGMVLSLFIMTSVTSLNSNSMSSMPIPITILVFAACEAAVGLALLVKVSNTYGTDYVQNLNLLQC</sequence>
<geneLocation type="mitochondrion"/>
<organism>
    <name type="scientific">Mus musculus</name>
    <name type="common">Mouse</name>
    <dbReference type="NCBI Taxonomy" id="10090"/>
    <lineage>
        <taxon>Eukaryota</taxon>
        <taxon>Metazoa</taxon>
        <taxon>Chordata</taxon>
        <taxon>Craniata</taxon>
        <taxon>Vertebrata</taxon>
        <taxon>Euteleostomi</taxon>
        <taxon>Mammalia</taxon>
        <taxon>Eutheria</taxon>
        <taxon>Euarchontoglires</taxon>
        <taxon>Glires</taxon>
        <taxon>Rodentia</taxon>
        <taxon>Myomorpha</taxon>
        <taxon>Muroidea</taxon>
        <taxon>Muridae</taxon>
        <taxon>Murinae</taxon>
        <taxon>Mus</taxon>
        <taxon>Mus</taxon>
    </lineage>
</organism>
<gene>
    <name evidence="7" type="primary">Mtnd4l</name>
    <name type="synonym">mt-Nd4l</name>
    <name type="synonym">Nd4l</name>
</gene>
<keyword id="KW-0002">3D-structure</keyword>
<keyword id="KW-0249">Electron transport</keyword>
<keyword id="KW-0472">Membrane</keyword>
<keyword id="KW-0496">Mitochondrion</keyword>
<keyword id="KW-0999">Mitochondrion inner membrane</keyword>
<keyword id="KW-0520">NAD</keyword>
<keyword id="KW-1185">Reference proteome</keyword>
<keyword id="KW-0679">Respiratory chain</keyword>
<keyword id="KW-1278">Translocase</keyword>
<keyword id="KW-0812">Transmembrane</keyword>
<keyword id="KW-1133">Transmembrane helix</keyword>
<keyword id="KW-0813">Transport</keyword>
<keyword id="KW-0830">Ubiquinone</keyword>
<feature type="chain" id="PRO_0000118448" description="NADH-ubiquinone oxidoreductase chain 4L">
    <location>
        <begin position="1"/>
        <end position="98"/>
    </location>
</feature>
<feature type="transmembrane region" description="Helical" evidence="2">
    <location>
        <begin position="2"/>
        <end position="22"/>
    </location>
</feature>
<feature type="transmembrane region" description="Helical" evidence="2">
    <location>
        <begin position="26"/>
        <end position="46"/>
    </location>
</feature>
<feature type="transmembrane region" description="Helical" evidence="2">
    <location>
        <begin position="58"/>
        <end position="79"/>
    </location>
</feature>
<feature type="sequence conflict" description="In Ref. 1; AAB48652/CAA24087." evidence="5" ref="1">
    <location>
        <position position="63"/>
    </location>
</feature>
<feature type="helix" evidence="11">
    <location>
        <begin position="2"/>
        <end position="20"/>
    </location>
</feature>
<feature type="helix" evidence="11">
    <location>
        <begin position="26"/>
        <end position="50"/>
    </location>
</feature>
<feature type="helix" evidence="11">
    <location>
        <begin position="54"/>
        <end position="56"/>
    </location>
</feature>
<feature type="helix" evidence="11">
    <location>
        <begin position="58"/>
        <end position="85"/>
    </location>
</feature>
<feature type="helix" evidence="11">
    <location>
        <begin position="90"/>
        <end position="92"/>
    </location>
</feature>
<feature type="helix" evidence="11">
    <location>
        <begin position="95"/>
        <end position="97"/>
    </location>
</feature>
<dbReference type="EC" id="7.1.1.2" evidence="3"/>
<dbReference type="EMBL" id="J01420">
    <property type="protein sequence ID" value="AAB48652.1"/>
    <property type="molecule type" value="Genomic_DNA"/>
</dbReference>
<dbReference type="EMBL" id="V00711">
    <property type="protein sequence ID" value="CAA24087.1"/>
    <property type="molecule type" value="Genomic_DNA"/>
</dbReference>
<dbReference type="EMBL" id="AY172335">
    <property type="protein sequence ID" value="AAN85130.1"/>
    <property type="molecule type" value="Genomic_DNA"/>
</dbReference>
<dbReference type="PIR" id="A00430">
    <property type="entry name" value="QXMS4L"/>
</dbReference>
<dbReference type="RefSeq" id="NP_904336.1">
    <property type="nucleotide sequence ID" value="NC_005089.1"/>
</dbReference>
<dbReference type="PDB" id="6G2J">
    <property type="method" value="EM"/>
    <property type="resolution" value="3.30 A"/>
    <property type="chains" value="K=1-98"/>
</dbReference>
<dbReference type="PDB" id="6G72">
    <property type="method" value="EM"/>
    <property type="resolution" value="3.90 A"/>
    <property type="chains" value="K=1-98"/>
</dbReference>
<dbReference type="PDB" id="6ZR2">
    <property type="method" value="EM"/>
    <property type="resolution" value="3.10 A"/>
    <property type="chains" value="K=1-98"/>
</dbReference>
<dbReference type="PDB" id="6ZTQ">
    <property type="method" value="EM"/>
    <property type="resolution" value="3.00 A"/>
    <property type="chains" value="K=1-98"/>
</dbReference>
<dbReference type="PDB" id="7AK5">
    <property type="method" value="EM"/>
    <property type="resolution" value="3.17 A"/>
    <property type="chains" value="K=1-98"/>
</dbReference>
<dbReference type="PDB" id="7AK6">
    <property type="method" value="EM"/>
    <property type="resolution" value="3.82 A"/>
    <property type="chains" value="K=1-98"/>
</dbReference>
<dbReference type="PDB" id="7B93">
    <property type="method" value="EM"/>
    <property type="resolution" value="3.04 A"/>
    <property type="chains" value="K=1-98"/>
</dbReference>
<dbReference type="PDB" id="7PSA">
    <property type="method" value="EM"/>
    <property type="resolution" value="3.40 A"/>
    <property type="chains" value="K=1-98"/>
</dbReference>
<dbReference type="PDB" id="8C2S">
    <property type="method" value="EM"/>
    <property type="resolution" value="3.90 A"/>
    <property type="chains" value="K=1-98"/>
</dbReference>
<dbReference type="PDB" id="8CA3">
    <property type="method" value="EM"/>
    <property type="resolution" value="3.20 A"/>
    <property type="chains" value="K=1-98"/>
</dbReference>
<dbReference type="PDB" id="8CA5">
    <property type="method" value="EM"/>
    <property type="resolution" value="3.90 A"/>
    <property type="chains" value="K=1-98"/>
</dbReference>
<dbReference type="PDB" id="8IAO">
    <property type="method" value="EM"/>
    <property type="resolution" value="4.20 A"/>
    <property type="chains" value="K=1-98"/>
</dbReference>
<dbReference type="PDB" id="8IAQ">
    <property type="method" value="EM"/>
    <property type="resolution" value="3.40 A"/>
    <property type="chains" value="K=1-98"/>
</dbReference>
<dbReference type="PDB" id="8IB4">
    <property type="method" value="EM"/>
    <property type="resolution" value="4.30 A"/>
    <property type="chains" value="K=1-98"/>
</dbReference>
<dbReference type="PDB" id="8IB6">
    <property type="method" value="EM"/>
    <property type="resolution" value="3.30 A"/>
    <property type="chains" value="K=1-98"/>
</dbReference>
<dbReference type="PDB" id="8IB9">
    <property type="method" value="EM"/>
    <property type="resolution" value="4.30 A"/>
    <property type="chains" value="K=1-98"/>
</dbReference>
<dbReference type="PDB" id="8IBB">
    <property type="method" value="EM"/>
    <property type="resolution" value="3.30 A"/>
    <property type="chains" value="K=1-98"/>
</dbReference>
<dbReference type="PDB" id="8IBD">
    <property type="method" value="EM"/>
    <property type="resolution" value="4.20 A"/>
    <property type="chains" value="K=1-98"/>
</dbReference>
<dbReference type="PDB" id="8IBF">
    <property type="method" value="EM"/>
    <property type="resolution" value="3.30 A"/>
    <property type="chains" value="K=1-98"/>
</dbReference>
<dbReference type="PDB" id="8IC2">
    <property type="method" value="EM"/>
    <property type="resolution" value="6.30 A"/>
    <property type="chains" value="K=1-98"/>
</dbReference>
<dbReference type="PDB" id="8IC4">
    <property type="method" value="EM"/>
    <property type="resolution" value="3.20 A"/>
    <property type="chains" value="K=1-98"/>
</dbReference>
<dbReference type="PDB" id="8OLT">
    <property type="method" value="EM"/>
    <property type="resolution" value="2.84 A"/>
    <property type="chains" value="K=1-98"/>
</dbReference>
<dbReference type="PDB" id="8OM1">
    <property type="method" value="EM"/>
    <property type="resolution" value="2.39 A"/>
    <property type="chains" value="K=1-98"/>
</dbReference>
<dbReference type="PDB" id="8PW5">
    <property type="method" value="EM"/>
    <property type="resolution" value="3.60 A"/>
    <property type="chains" value="K1=1-98"/>
</dbReference>
<dbReference type="PDB" id="8PW6">
    <property type="method" value="EM"/>
    <property type="resolution" value="3.30 A"/>
    <property type="chains" value="K1=1-98"/>
</dbReference>
<dbReference type="PDB" id="8PW7">
    <property type="method" value="EM"/>
    <property type="resolution" value="3.50 A"/>
    <property type="chains" value="K1=1-98"/>
</dbReference>
<dbReference type="PDB" id="8RGP">
    <property type="method" value="EM"/>
    <property type="resolution" value="3.00 A"/>
    <property type="chains" value="K=1-98"/>
</dbReference>
<dbReference type="PDB" id="8RGQ">
    <property type="method" value="EM"/>
    <property type="resolution" value="3.00 A"/>
    <property type="chains" value="K=1-98"/>
</dbReference>
<dbReference type="PDB" id="8RGR">
    <property type="method" value="EM"/>
    <property type="resolution" value="2.90 A"/>
    <property type="chains" value="K=1-98"/>
</dbReference>
<dbReference type="PDB" id="8RGT">
    <property type="method" value="EM"/>
    <property type="resolution" value="3.10 A"/>
    <property type="chains" value="K=1-98"/>
</dbReference>
<dbReference type="PDB" id="8UCA">
    <property type="method" value="EM"/>
    <property type="resolution" value="3.70 A"/>
    <property type="chains" value="4L/4l=1-98"/>
</dbReference>
<dbReference type="PDBsum" id="6G2J"/>
<dbReference type="PDBsum" id="6G72"/>
<dbReference type="PDBsum" id="6ZR2"/>
<dbReference type="PDBsum" id="6ZTQ"/>
<dbReference type="PDBsum" id="7AK5"/>
<dbReference type="PDBsum" id="7AK6"/>
<dbReference type="PDBsum" id="7B93"/>
<dbReference type="PDBsum" id="7PSA"/>
<dbReference type="PDBsum" id="8C2S"/>
<dbReference type="PDBsum" id="8CA3"/>
<dbReference type="PDBsum" id="8CA5"/>
<dbReference type="PDBsum" id="8IAO"/>
<dbReference type="PDBsum" id="8IAQ"/>
<dbReference type="PDBsum" id="8IB4"/>
<dbReference type="PDBsum" id="8IB6"/>
<dbReference type="PDBsum" id="8IB9"/>
<dbReference type="PDBsum" id="8IBB"/>
<dbReference type="PDBsum" id="8IBD"/>
<dbReference type="PDBsum" id="8IBF"/>
<dbReference type="PDBsum" id="8IC2"/>
<dbReference type="PDBsum" id="8IC4"/>
<dbReference type="PDBsum" id="8OLT"/>
<dbReference type="PDBsum" id="8OM1"/>
<dbReference type="PDBsum" id="8PW5"/>
<dbReference type="PDBsum" id="8PW6"/>
<dbReference type="PDBsum" id="8PW7"/>
<dbReference type="PDBsum" id="8RGP"/>
<dbReference type="PDBsum" id="8RGQ"/>
<dbReference type="PDBsum" id="8RGR"/>
<dbReference type="PDBsum" id="8RGT"/>
<dbReference type="PDBsum" id="8UCA"/>
<dbReference type="EMDB" id="EMD-11377"/>
<dbReference type="EMDB" id="EMD-11424"/>
<dbReference type="EMDB" id="EMD-11810"/>
<dbReference type="EMDB" id="EMD-11811"/>
<dbReference type="EMDB" id="EMD-12095"/>
<dbReference type="EMDB" id="EMD-13611"/>
<dbReference type="EMDB" id="EMD-16398"/>
<dbReference type="EMDB" id="EMD-16516"/>
<dbReference type="EMDB" id="EMD-16518"/>
<dbReference type="EMDB" id="EMD-16962"/>
<dbReference type="EMDB" id="EMD-16965"/>
<dbReference type="EMDB" id="EMD-17989"/>
<dbReference type="EMDB" id="EMD-17990"/>
<dbReference type="EMDB" id="EMD-17991"/>
<dbReference type="EMDB" id="EMD-19145"/>
<dbReference type="EMDB" id="EMD-19146"/>
<dbReference type="EMDB" id="EMD-19147"/>
<dbReference type="EMDB" id="EMD-19148"/>
<dbReference type="EMDB" id="EMD-35313"/>
<dbReference type="EMDB" id="EMD-35315"/>
<dbReference type="EMDB" id="EMD-35331"/>
<dbReference type="EMDB" id="EMD-35333"/>
<dbReference type="EMDB" id="EMD-35336"/>
<dbReference type="EMDB" id="EMD-35338"/>
<dbReference type="EMDB" id="EMD-35340"/>
<dbReference type="EMDB" id="EMD-35342"/>
<dbReference type="EMDB" id="EMD-35352"/>
<dbReference type="EMDB" id="EMD-35354"/>
<dbReference type="EMDB" id="EMD-42122"/>
<dbReference type="EMDB" id="EMD-4345"/>
<dbReference type="EMDB" id="EMD-4356"/>
<dbReference type="SMR" id="P03903"/>
<dbReference type="ComplexPortal" id="CPX-266">
    <property type="entry name" value="Mitochondrial respiratory chain complex I"/>
</dbReference>
<dbReference type="FunCoup" id="P03903">
    <property type="interactions" value="149"/>
</dbReference>
<dbReference type="IntAct" id="P03903">
    <property type="interactions" value="1"/>
</dbReference>
<dbReference type="STRING" id="10090.ENSMUSP00000081021"/>
<dbReference type="iPTMnet" id="P03903"/>
<dbReference type="SwissPalm" id="P03903"/>
<dbReference type="PaxDb" id="10090-ENSMUSP00000081021"/>
<dbReference type="ProteomicsDB" id="289947"/>
<dbReference type="Antibodypedia" id="68604">
    <property type="antibodies" value="72 antibodies from 19 providers"/>
</dbReference>
<dbReference type="Ensembl" id="ENSMUST00000084013.1">
    <property type="protein sequence ID" value="ENSMUSP00000081021.1"/>
    <property type="gene ID" value="ENSMUSG00000065947.1"/>
</dbReference>
<dbReference type="GeneID" id="17720"/>
<dbReference type="KEGG" id="mmu:17720"/>
<dbReference type="AGR" id="MGI:102497"/>
<dbReference type="CTD" id="4539"/>
<dbReference type="MGI" id="MGI:102497">
    <property type="gene designation" value="mt-Nd4l"/>
</dbReference>
<dbReference type="VEuPathDB" id="HostDB:ENSMUSG00000065947"/>
<dbReference type="eggNOG" id="KOG4669">
    <property type="taxonomic scope" value="Eukaryota"/>
</dbReference>
<dbReference type="GeneTree" id="ENSGT00390000004755"/>
<dbReference type="HOGENOM" id="CLU_182394_0_0_1"/>
<dbReference type="InParanoid" id="P03903"/>
<dbReference type="OMA" id="MYRSHLM"/>
<dbReference type="OrthoDB" id="6146597at2759"/>
<dbReference type="PhylomeDB" id="P03903"/>
<dbReference type="ChiTaRS" id="mt-Nd4l">
    <property type="organism name" value="mouse"/>
</dbReference>
<dbReference type="PRO" id="PR:P03903"/>
<dbReference type="Proteomes" id="UP000000589">
    <property type="component" value="Mitochondrion MT"/>
</dbReference>
<dbReference type="RNAct" id="P03903">
    <property type="molecule type" value="protein"/>
</dbReference>
<dbReference type="Bgee" id="ENSMUSG00000065947">
    <property type="expression patterns" value="Expressed in cerebellar cortex and 63 other cell types or tissues"/>
</dbReference>
<dbReference type="ExpressionAtlas" id="P03903">
    <property type="expression patterns" value="baseline and differential"/>
</dbReference>
<dbReference type="GO" id="GO:0005743">
    <property type="term" value="C:mitochondrial inner membrane"/>
    <property type="evidence" value="ECO:0000314"/>
    <property type="project" value="UniProtKB"/>
</dbReference>
<dbReference type="GO" id="GO:0005739">
    <property type="term" value="C:mitochondrion"/>
    <property type="evidence" value="ECO:0007005"/>
    <property type="project" value="MGI"/>
</dbReference>
<dbReference type="GO" id="GO:0045271">
    <property type="term" value="C:respiratory chain complex I"/>
    <property type="evidence" value="ECO:0000314"/>
    <property type="project" value="UniProtKB"/>
</dbReference>
<dbReference type="GO" id="GO:0008137">
    <property type="term" value="F:NADH dehydrogenase (ubiquinone) activity"/>
    <property type="evidence" value="ECO:0007669"/>
    <property type="project" value="UniProtKB-EC"/>
</dbReference>
<dbReference type="GO" id="GO:0009060">
    <property type="term" value="P:aerobic respiration"/>
    <property type="evidence" value="ECO:0000303"/>
    <property type="project" value="ComplexPortal"/>
</dbReference>
<dbReference type="GO" id="GO:0042773">
    <property type="term" value="P:ATP synthesis coupled electron transport"/>
    <property type="evidence" value="ECO:0007669"/>
    <property type="project" value="InterPro"/>
</dbReference>
<dbReference type="GO" id="GO:0042776">
    <property type="term" value="P:proton motive force-driven mitochondrial ATP synthesis"/>
    <property type="evidence" value="ECO:0000303"/>
    <property type="project" value="ComplexPortal"/>
</dbReference>
<dbReference type="FunFam" id="1.10.287.3510:FF:000002">
    <property type="entry name" value="NADH-ubiquinone oxidoreductase chain 4L"/>
    <property type="match status" value="1"/>
</dbReference>
<dbReference type="Gene3D" id="1.10.287.3510">
    <property type="match status" value="1"/>
</dbReference>
<dbReference type="InterPro" id="IPR001133">
    <property type="entry name" value="NADH_UbQ_OxRdtase_chain4L/K"/>
</dbReference>
<dbReference type="InterPro" id="IPR039428">
    <property type="entry name" value="NUOK/Mnh_C1-like"/>
</dbReference>
<dbReference type="PANTHER" id="PTHR11434:SF0">
    <property type="entry name" value="NADH-UBIQUINONE OXIDOREDUCTASE CHAIN 4L"/>
    <property type="match status" value="1"/>
</dbReference>
<dbReference type="PANTHER" id="PTHR11434">
    <property type="entry name" value="NADH-UBIQUINONE OXIDOREDUCTASE SUBUNIT ND4L"/>
    <property type="match status" value="1"/>
</dbReference>
<dbReference type="Pfam" id="PF00420">
    <property type="entry name" value="Oxidored_q2"/>
    <property type="match status" value="1"/>
</dbReference>
<accession>P03903</accession>
<name>NU4LM_MOUSE</name>
<protein>
    <recommendedName>
        <fullName>NADH-ubiquinone oxidoreductase chain 4L</fullName>
        <ecNumber evidence="3">7.1.1.2</ecNumber>
    </recommendedName>
    <alternativeName>
        <fullName evidence="1">NADH dehydrogenase subunit 4L</fullName>
    </alternativeName>
</protein>
<evidence type="ECO:0000250" key="1">
    <source>
        <dbReference type="UniProtKB" id="P03901"/>
    </source>
</evidence>
<evidence type="ECO:0000255" key="2"/>
<evidence type="ECO:0000269" key="3">
    <source>
    </source>
</evidence>
<evidence type="ECO:0000269" key="4">
    <source>
    </source>
</evidence>
<evidence type="ECO:0000305" key="5"/>
<evidence type="ECO:0000305" key="6">
    <source>
    </source>
</evidence>
<evidence type="ECO:0000312" key="7">
    <source>
        <dbReference type="MGI" id="MGI:102497"/>
    </source>
</evidence>
<evidence type="ECO:0007744" key="8">
    <source>
        <dbReference type="PDB" id="6G2J"/>
    </source>
</evidence>
<evidence type="ECO:0007744" key="9">
    <source>
        <dbReference type="PDB" id="6G72"/>
    </source>
</evidence>
<evidence type="ECO:0007744" key="10">
    <source>
        <dbReference type="PDB" id="8PW5"/>
    </source>
</evidence>
<evidence type="ECO:0007829" key="11">
    <source>
        <dbReference type="PDB" id="8OM1"/>
    </source>
</evidence>